<feature type="chain" id="PRO_1000010379" description="Heat-inducible transcription repressor HrcA">
    <location>
        <begin position="1"/>
        <end position="375"/>
    </location>
</feature>
<feature type="region of interest" description="Disordered" evidence="2">
    <location>
        <begin position="307"/>
        <end position="331"/>
    </location>
</feature>
<feature type="compositionally biased region" description="Low complexity" evidence="2">
    <location>
        <begin position="307"/>
        <end position="318"/>
    </location>
</feature>
<accession>A1A1M6</accession>
<keyword id="KW-1185">Reference proteome</keyword>
<keyword id="KW-0678">Repressor</keyword>
<keyword id="KW-0346">Stress response</keyword>
<keyword id="KW-0804">Transcription</keyword>
<keyword id="KW-0805">Transcription regulation</keyword>
<protein>
    <recommendedName>
        <fullName evidence="1">Heat-inducible transcription repressor HrcA</fullName>
    </recommendedName>
</protein>
<proteinExistence type="inferred from homology"/>
<evidence type="ECO:0000255" key="1">
    <source>
        <dbReference type="HAMAP-Rule" id="MF_00081"/>
    </source>
</evidence>
<evidence type="ECO:0000256" key="2">
    <source>
        <dbReference type="SAM" id="MobiDB-lite"/>
    </source>
</evidence>
<comment type="function">
    <text evidence="1">Negative regulator of class I heat shock genes (grpE-dnaK-dnaJ and groELS operons). Prevents heat-shock induction of these operons.</text>
</comment>
<comment type="similarity">
    <text evidence="1">Belongs to the HrcA family.</text>
</comment>
<organism>
    <name type="scientific">Bifidobacterium adolescentis (strain ATCC 15703 / DSM 20083 / NCTC 11814 / E194a)</name>
    <dbReference type="NCBI Taxonomy" id="367928"/>
    <lineage>
        <taxon>Bacteria</taxon>
        <taxon>Bacillati</taxon>
        <taxon>Actinomycetota</taxon>
        <taxon>Actinomycetes</taxon>
        <taxon>Bifidobacteriales</taxon>
        <taxon>Bifidobacteriaceae</taxon>
        <taxon>Bifidobacterium</taxon>
    </lineage>
</organism>
<name>HRCA_BIFAA</name>
<gene>
    <name evidence="1" type="primary">hrcA</name>
    <name type="ordered locus">BAD_0828</name>
</gene>
<dbReference type="EMBL" id="AP009256">
    <property type="protein sequence ID" value="BAF39609.1"/>
    <property type="molecule type" value="Genomic_DNA"/>
</dbReference>
<dbReference type="SMR" id="A1A1M6"/>
<dbReference type="STRING" id="367928.BAD_0828"/>
<dbReference type="PaxDb" id="1680-BADO_0881"/>
<dbReference type="DNASU" id="4556181"/>
<dbReference type="KEGG" id="bad:BAD_0828"/>
<dbReference type="HOGENOM" id="CLU_050019_2_0_11"/>
<dbReference type="Proteomes" id="UP000008702">
    <property type="component" value="Chromosome"/>
</dbReference>
<dbReference type="GO" id="GO:0003677">
    <property type="term" value="F:DNA binding"/>
    <property type="evidence" value="ECO:0007669"/>
    <property type="project" value="InterPro"/>
</dbReference>
<dbReference type="GO" id="GO:0045892">
    <property type="term" value="P:negative regulation of DNA-templated transcription"/>
    <property type="evidence" value="ECO:0007669"/>
    <property type="project" value="UniProtKB-UniRule"/>
</dbReference>
<dbReference type="FunFam" id="1.10.10.10:FF:000049">
    <property type="entry name" value="Heat-inducible transcription repressor HrcA"/>
    <property type="match status" value="1"/>
</dbReference>
<dbReference type="Gene3D" id="3.30.450.40">
    <property type="match status" value="1"/>
</dbReference>
<dbReference type="Gene3D" id="3.30.390.60">
    <property type="entry name" value="Heat-inducible transcription repressor hrca homolog, domain 3"/>
    <property type="match status" value="1"/>
</dbReference>
<dbReference type="Gene3D" id="1.10.10.10">
    <property type="entry name" value="Winged helix-like DNA-binding domain superfamily/Winged helix DNA-binding domain"/>
    <property type="match status" value="1"/>
</dbReference>
<dbReference type="HAMAP" id="MF_00081">
    <property type="entry name" value="HrcA"/>
    <property type="match status" value="1"/>
</dbReference>
<dbReference type="InterPro" id="IPR029016">
    <property type="entry name" value="GAF-like_dom_sf"/>
</dbReference>
<dbReference type="InterPro" id="IPR002571">
    <property type="entry name" value="HrcA"/>
</dbReference>
<dbReference type="InterPro" id="IPR021153">
    <property type="entry name" value="HrcA_C"/>
</dbReference>
<dbReference type="InterPro" id="IPR036388">
    <property type="entry name" value="WH-like_DNA-bd_sf"/>
</dbReference>
<dbReference type="InterPro" id="IPR036390">
    <property type="entry name" value="WH_DNA-bd_sf"/>
</dbReference>
<dbReference type="InterPro" id="IPR023120">
    <property type="entry name" value="WHTH_transcript_rep_HrcA_IDD"/>
</dbReference>
<dbReference type="NCBIfam" id="TIGR00331">
    <property type="entry name" value="hrcA"/>
    <property type="match status" value="1"/>
</dbReference>
<dbReference type="PANTHER" id="PTHR34824">
    <property type="entry name" value="HEAT-INDUCIBLE TRANSCRIPTION REPRESSOR HRCA"/>
    <property type="match status" value="1"/>
</dbReference>
<dbReference type="PANTHER" id="PTHR34824:SF1">
    <property type="entry name" value="HEAT-INDUCIBLE TRANSCRIPTION REPRESSOR HRCA"/>
    <property type="match status" value="1"/>
</dbReference>
<dbReference type="Pfam" id="PF01628">
    <property type="entry name" value="HrcA"/>
    <property type="match status" value="1"/>
</dbReference>
<dbReference type="PIRSF" id="PIRSF005485">
    <property type="entry name" value="HrcA"/>
    <property type="match status" value="1"/>
</dbReference>
<dbReference type="SUPFAM" id="SSF55781">
    <property type="entry name" value="GAF domain-like"/>
    <property type="match status" value="1"/>
</dbReference>
<dbReference type="SUPFAM" id="SSF46785">
    <property type="entry name" value="Winged helix' DNA-binding domain"/>
    <property type="match status" value="1"/>
</dbReference>
<sequence>MAQSRRMLVLRAVVEDYIRSQEPVGSTTLTRDHDLGVSSATVRNDMAALEDEGYLIQPHTSAGRVPTEKGYRYFVDRLATVVPLSEAQRRGINSFLSGSVNLQDTLQRAARLLAQITGQVAVVAAPSLSKSTLRHIEIVPVSINTLLAVVITDTGRVAQHILNVTKLPDVTTLTHLTNEINTQCSGVSLTRTADCVRQMGARKEYHAISTLAETLAQAFDGMADDERASELYMAGTSRLAHQRTVADLAPLFDALEEQVVLMKLMSSLSETTQSDGVGVAIGSETHTPGLLHASVVTSGYGRTSAAATDGATHAAASSQTENQSGDDTRQAGEPVAFVGSIGPTHMDYAATMAAVRAVARYLTAFLAHDEGQPAD</sequence>
<reference key="1">
    <citation type="submission" date="2006-12" db="EMBL/GenBank/DDBJ databases">
        <title>Bifidobacterium adolescentis complete genome sequence.</title>
        <authorList>
            <person name="Suzuki T."/>
            <person name="Tsuda Y."/>
            <person name="Kanou N."/>
            <person name="Inoue T."/>
            <person name="Kumazaki K."/>
            <person name="Nagano S."/>
            <person name="Hirai S."/>
            <person name="Tanaka K."/>
            <person name="Watanabe K."/>
        </authorList>
    </citation>
    <scope>NUCLEOTIDE SEQUENCE [LARGE SCALE GENOMIC DNA]</scope>
    <source>
        <strain>ATCC 15703 / DSM 20083 / NCTC 11814 / E194a</strain>
    </source>
</reference>